<accession>P16631</accession>
<name>RR3_GRATE</name>
<proteinExistence type="inferred from homology"/>
<organism>
    <name type="scientific">Gracilaria tenuistipitata</name>
    <name type="common">Red alga</name>
    <name type="synonym">Agarophyton tenuistipitatum</name>
    <dbReference type="NCBI Taxonomy" id="2510778"/>
    <lineage>
        <taxon>Eukaryota</taxon>
        <taxon>Rhodophyta</taxon>
        <taxon>Florideophyceae</taxon>
        <taxon>Rhodymeniophycidae</taxon>
        <taxon>Gracilariales</taxon>
        <taxon>Gracilariaceae</taxon>
        <taxon>Gracilaria</taxon>
    </lineage>
</organism>
<geneLocation type="chloroplast"/>
<protein>
    <recommendedName>
        <fullName evidence="2">Small ribosomal subunit protein uS3c</fullName>
    </recommendedName>
    <alternativeName>
        <fullName>30S ribosomal protein S3, chloroplastic</fullName>
    </alternativeName>
</protein>
<reference key="1">
    <citation type="journal article" date="1990" name="Gene">
        <title>Cloning and characterization of chloroplast ribosomal protein-encoding genes, rpl16 and rps3, of the marine macro-algae, Gracilaria tenuistipitata.</title>
        <authorList>
            <person name="Kao J.-S."/>
            <person name="Wu M."/>
            <person name="Chiang Y.-M."/>
        </authorList>
    </citation>
    <scope>NUCLEOTIDE SEQUENCE [GENOMIC DNA]</scope>
</reference>
<comment type="subunit">
    <text evidence="1">Part of the 30S ribosomal subunit.</text>
</comment>
<comment type="subcellular location">
    <subcellularLocation>
        <location>Plastid</location>
        <location>Chloroplast</location>
    </subcellularLocation>
</comment>
<comment type="similarity">
    <text evidence="2">Belongs to the universal ribosomal protein uS3 family.</text>
</comment>
<dbReference type="EMBL" id="M32638">
    <property type="protein sequence ID" value="AAA84292.1"/>
    <property type="molecule type" value="Genomic_DNA"/>
</dbReference>
<dbReference type="PIR" id="JH0187">
    <property type="entry name" value="JH0187"/>
</dbReference>
<dbReference type="SMR" id="P16631"/>
<dbReference type="GO" id="GO:0009507">
    <property type="term" value="C:chloroplast"/>
    <property type="evidence" value="ECO:0007669"/>
    <property type="project" value="UniProtKB-SubCell"/>
</dbReference>
<dbReference type="GO" id="GO:0022627">
    <property type="term" value="C:cytosolic small ribosomal subunit"/>
    <property type="evidence" value="ECO:0007669"/>
    <property type="project" value="TreeGrafter"/>
</dbReference>
<dbReference type="GO" id="GO:0019843">
    <property type="term" value="F:rRNA binding"/>
    <property type="evidence" value="ECO:0007669"/>
    <property type="project" value="UniProtKB-UniRule"/>
</dbReference>
<dbReference type="GO" id="GO:0003735">
    <property type="term" value="F:structural constituent of ribosome"/>
    <property type="evidence" value="ECO:0007669"/>
    <property type="project" value="InterPro"/>
</dbReference>
<dbReference type="GO" id="GO:0006412">
    <property type="term" value="P:translation"/>
    <property type="evidence" value="ECO:0007669"/>
    <property type="project" value="UniProtKB-UniRule"/>
</dbReference>
<dbReference type="CDD" id="cd02412">
    <property type="entry name" value="KH-II_30S_S3"/>
    <property type="match status" value="1"/>
</dbReference>
<dbReference type="FunFam" id="3.30.300.20:FF:000001">
    <property type="entry name" value="30S ribosomal protein S3"/>
    <property type="match status" value="1"/>
</dbReference>
<dbReference type="Gene3D" id="3.30.300.20">
    <property type="match status" value="1"/>
</dbReference>
<dbReference type="Gene3D" id="3.30.1140.32">
    <property type="entry name" value="Ribosomal protein S3, C-terminal domain"/>
    <property type="match status" value="1"/>
</dbReference>
<dbReference type="HAMAP" id="MF_01309_B">
    <property type="entry name" value="Ribosomal_uS3_B"/>
    <property type="match status" value="1"/>
</dbReference>
<dbReference type="InterPro" id="IPR004087">
    <property type="entry name" value="KH_dom"/>
</dbReference>
<dbReference type="InterPro" id="IPR015946">
    <property type="entry name" value="KH_dom-like_a/b"/>
</dbReference>
<dbReference type="InterPro" id="IPR004044">
    <property type="entry name" value="KH_dom_type_2"/>
</dbReference>
<dbReference type="InterPro" id="IPR009019">
    <property type="entry name" value="KH_sf_prok-type"/>
</dbReference>
<dbReference type="InterPro" id="IPR036419">
    <property type="entry name" value="Ribosomal_S3_C_sf"/>
</dbReference>
<dbReference type="InterPro" id="IPR005704">
    <property type="entry name" value="Ribosomal_uS3_bac-typ"/>
</dbReference>
<dbReference type="InterPro" id="IPR001351">
    <property type="entry name" value="Ribosomal_uS3_C"/>
</dbReference>
<dbReference type="InterPro" id="IPR018280">
    <property type="entry name" value="Ribosomal_uS3_CS"/>
</dbReference>
<dbReference type="NCBIfam" id="TIGR01009">
    <property type="entry name" value="rpsC_bact"/>
    <property type="match status" value="1"/>
</dbReference>
<dbReference type="PANTHER" id="PTHR11760">
    <property type="entry name" value="30S/40S RIBOSOMAL PROTEIN S3"/>
    <property type="match status" value="1"/>
</dbReference>
<dbReference type="PANTHER" id="PTHR11760:SF19">
    <property type="entry name" value="SMALL RIBOSOMAL SUBUNIT PROTEIN US3C"/>
    <property type="match status" value="1"/>
</dbReference>
<dbReference type="Pfam" id="PF07650">
    <property type="entry name" value="KH_2"/>
    <property type="match status" value="1"/>
</dbReference>
<dbReference type="Pfam" id="PF00189">
    <property type="entry name" value="Ribosomal_S3_C"/>
    <property type="match status" value="1"/>
</dbReference>
<dbReference type="SMART" id="SM00322">
    <property type="entry name" value="KH"/>
    <property type="match status" value="1"/>
</dbReference>
<dbReference type="SUPFAM" id="SSF54814">
    <property type="entry name" value="Prokaryotic type KH domain (KH-domain type II)"/>
    <property type="match status" value="1"/>
</dbReference>
<dbReference type="SUPFAM" id="SSF54821">
    <property type="entry name" value="Ribosomal protein S3 C-terminal domain"/>
    <property type="match status" value="1"/>
</dbReference>
<dbReference type="PROSITE" id="PS50823">
    <property type="entry name" value="KH_TYPE_2"/>
    <property type="match status" value="1"/>
</dbReference>
<dbReference type="PROSITE" id="PS00548">
    <property type="entry name" value="RIBOSOMAL_S3"/>
    <property type="match status" value="1"/>
</dbReference>
<gene>
    <name type="primary">rps3</name>
</gene>
<feature type="chain" id="PRO_0000130282" description="Small ribosomal subunit protein uS3c">
    <location>
        <begin position="1"/>
        <end position="209"/>
    </location>
</feature>
<feature type="domain" description="KH type-2">
    <location>
        <begin position="39"/>
        <end position="109"/>
    </location>
</feature>
<sequence>MGQKTHPLGFRIGITRDHKSSWFSNIKSYPKLAQEDYKIRSCIEKQLHNASISLIYIDRKVAQVQVHIHTARPGIILGKLGRGLEDLRKKLETTLKNDTQIRINLIEITDPDKEATLIAEFIVQRLEKRIAFRRVIRQAMQRAQKAKNQGIKIQVSGRLNGSEIARIESVREGRVPLQTLRAHIDYSYKTTHTIYGILGVKYGYLKEKK</sequence>
<evidence type="ECO:0000250" key="1"/>
<evidence type="ECO:0000305" key="2"/>
<keyword id="KW-0150">Chloroplast</keyword>
<keyword id="KW-0934">Plastid</keyword>
<keyword id="KW-0687">Ribonucleoprotein</keyword>
<keyword id="KW-0689">Ribosomal protein</keyword>
<keyword id="KW-0694">RNA-binding</keyword>
<keyword id="KW-0699">rRNA-binding</keyword>